<protein>
    <recommendedName>
        <fullName>Uncharacterized membrane protein SACOL0809</fullName>
    </recommendedName>
</protein>
<reference key="1">
    <citation type="journal article" date="2005" name="J. Bacteriol.">
        <title>Insights on evolution of virulence and resistance from the complete genome analysis of an early methicillin-resistant Staphylococcus aureus strain and a biofilm-producing methicillin-resistant Staphylococcus epidermidis strain.</title>
        <authorList>
            <person name="Gill S.R."/>
            <person name="Fouts D.E."/>
            <person name="Archer G.L."/>
            <person name="Mongodin E.F."/>
            <person name="DeBoy R.T."/>
            <person name="Ravel J."/>
            <person name="Paulsen I.T."/>
            <person name="Kolonay J.F."/>
            <person name="Brinkac L.M."/>
            <person name="Beanan M.J."/>
            <person name="Dodson R.J."/>
            <person name="Daugherty S.C."/>
            <person name="Madupu R."/>
            <person name="Angiuoli S.V."/>
            <person name="Durkin A.S."/>
            <person name="Haft D.H."/>
            <person name="Vamathevan J.J."/>
            <person name="Khouri H."/>
            <person name="Utterback T.R."/>
            <person name="Lee C."/>
            <person name="Dimitrov G."/>
            <person name="Jiang L."/>
            <person name="Qin H."/>
            <person name="Weidman J."/>
            <person name="Tran K."/>
            <person name="Kang K.H."/>
            <person name="Hance I.R."/>
            <person name="Nelson K.E."/>
            <person name="Fraser C.M."/>
        </authorList>
    </citation>
    <scope>NUCLEOTIDE SEQUENCE [LARGE SCALE GENOMIC DNA]</scope>
    <source>
        <strain>COL</strain>
    </source>
</reference>
<keyword id="KW-1003">Cell membrane</keyword>
<keyword id="KW-0472">Membrane</keyword>
<keyword id="KW-0812">Transmembrane</keyword>
<keyword id="KW-1133">Transmembrane helix</keyword>
<comment type="subcellular location">
    <subcellularLocation>
        <location evidence="3">Cell membrane</location>
        <topology evidence="3">Multi-pass membrane protein</topology>
    </subcellularLocation>
</comment>
<feature type="chain" id="PRO_0000286953" description="Uncharacterized membrane protein SACOL0809">
    <location>
        <begin position="1"/>
        <end position="356"/>
    </location>
</feature>
<feature type="transmembrane region" description="Helical" evidence="1">
    <location>
        <begin position="2"/>
        <end position="22"/>
    </location>
</feature>
<feature type="transmembrane region" description="Helical" evidence="1">
    <location>
        <begin position="35"/>
        <end position="55"/>
    </location>
</feature>
<feature type="transmembrane region" description="Helical" evidence="1">
    <location>
        <begin position="74"/>
        <end position="94"/>
    </location>
</feature>
<feature type="transmembrane region" description="Helical" evidence="1">
    <location>
        <begin position="99"/>
        <end position="119"/>
    </location>
</feature>
<feature type="transmembrane region" description="Helical" evidence="1">
    <location>
        <begin position="124"/>
        <end position="144"/>
    </location>
</feature>
<feature type="transmembrane region" description="Helical" evidence="1">
    <location>
        <begin position="154"/>
        <end position="174"/>
    </location>
</feature>
<feature type="domain" description="GGDEF" evidence="2">
    <location>
        <begin position="218"/>
        <end position="353"/>
    </location>
</feature>
<dbReference type="EMBL" id="CP000046">
    <property type="protein sequence ID" value="AAW37864.1"/>
    <property type="molecule type" value="Genomic_DNA"/>
</dbReference>
<dbReference type="SMR" id="Q5HHS4"/>
<dbReference type="KEGG" id="sac:SACOL0809"/>
<dbReference type="HOGENOM" id="CLU_000445_11_1_9"/>
<dbReference type="Proteomes" id="UP000000530">
    <property type="component" value="Chromosome"/>
</dbReference>
<dbReference type="GO" id="GO:0005886">
    <property type="term" value="C:plasma membrane"/>
    <property type="evidence" value="ECO:0007669"/>
    <property type="project" value="UniProtKB-SubCell"/>
</dbReference>
<dbReference type="GO" id="GO:0052621">
    <property type="term" value="F:diguanylate cyclase activity"/>
    <property type="evidence" value="ECO:0007669"/>
    <property type="project" value="TreeGrafter"/>
</dbReference>
<dbReference type="GO" id="GO:0000155">
    <property type="term" value="F:phosphorelay sensor kinase activity"/>
    <property type="evidence" value="ECO:0007669"/>
    <property type="project" value="InterPro"/>
</dbReference>
<dbReference type="GO" id="GO:0043709">
    <property type="term" value="P:cell adhesion involved in single-species biofilm formation"/>
    <property type="evidence" value="ECO:0007669"/>
    <property type="project" value="TreeGrafter"/>
</dbReference>
<dbReference type="GO" id="GO:0071555">
    <property type="term" value="P:cell wall organization"/>
    <property type="evidence" value="ECO:0007669"/>
    <property type="project" value="InterPro"/>
</dbReference>
<dbReference type="GO" id="GO:1902201">
    <property type="term" value="P:negative regulation of bacterial-type flagellum-dependent cell motility"/>
    <property type="evidence" value="ECO:0007669"/>
    <property type="project" value="TreeGrafter"/>
</dbReference>
<dbReference type="CDD" id="cd01949">
    <property type="entry name" value="GGDEF"/>
    <property type="match status" value="1"/>
</dbReference>
<dbReference type="FunFam" id="3.30.70.270:FF:000038">
    <property type="entry name" value="Diguanylate cyclase domain protein"/>
    <property type="match status" value="1"/>
</dbReference>
<dbReference type="Gene3D" id="3.30.70.270">
    <property type="match status" value="1"/>
</dbReference>
<dbReference type="InterPro" id="IPR050469">
    <property type="entry name" value="Diguanylate_Cyclase"/>
</dbReference>
<dbReference type="InterPro" id="IPR000160">
    <property type="entry name" value="GGDEF_dom"/>
</dbReference>
<dbReference type="InterPro" id="IPR029787">
    <property type="entry name" value="Nucleotide_cyclase"/>
</dbReference>
<dbReference type="InterPro" id="IPR043128">
    <property type="entry name" value="Rev_trsase/Diguanyl_cyclase"/>
</dbReference>
<dbReference type="InterPro" id="IPR011620">
    <property type="entry name" value="Sig_transdc_His_kinase_LytS_TM"/>
</dbReference>
<dbReference type="NCBIfam" id="TIGR00254">
    <property type="entry name" value="GGDEF"/>
    <property type="match status" value="1"/>
</dbReference>
<dbReference type="PANTHER" id="PTHR45138:SF9">
    <property type="entry name" value="DIGUANYLATE CYCLASE DGCM-RELATED"/>
    <property type="match status" value="1"/>
</dbReference>
<dbReference type="PANTHER" id="PTHR45138">
    <property type="entry name" value="REGULATORY COMPONENTS OF SENSORY TRANSDUCTION SYSTEM"/>
    <property type="match status" value="1"/>
</dbReference>
<dbReference type="Pfam" id="PF07694">
    <property type="entry name" value="5TM-5TMR_LYT"/>
    <property type="match status" value="1"/>
</dbReference>
<dbReference type="Pfam" id="PF00990">
    <property type="entry name" value="GGDEF"/>
    <property type="match status" value="1"/>
</dbReference>
<dbReference type="SMART" id="SM00267">
    <property type="entry name" value="GGDEF"/>
    <property type="match status" value="1"/>
</dbReference>
<dbReference type="SUPFAM" id="SSF55073">
    <property type="entry name" value="Nucleotide cyclase"/>
    <property type="match status" value="1"/>
</dbReference>
<dbReference type="PROSITE" id="PS50887">
    <property type="entry name" value="GGDEF"/>
    <property type="match status" value="1"/>
</dbReference>
<organism>
    <name type="scientific">Staphylococcus aureus (strain COL)</name>
    <dbReference type="NCBI Taxonomy" id="93062"/>
    <lineage>
        <taxon>Bacteria</taxon>
        <taxon>Bacillati</taxon>
        <taxon>Bacillota</taxon>
        <taxon>Bacilli</taxon>
        <taxon>Bacillales</taxon>
        <taxon>Staphylococcaceae</taxon>
        <taxon>Staphylococcus</taxon>
    </lineage>
</organism>
<name>Y809_STAAC</name>
<evidence type="ECO:0000255" key="1"/>
<evidence type="ECO:0000255" key="2">
    <source>
        <dbReference type="PROSITE-ProRule" id="PRU00095"/>
    </source>
</evidence>
<evidence type="ECO:0000305" key="3"/>
<gene>
    <name type="ordered locus">SACOL0809</name>
</gene>
<sequence>MFEAFIYNISVIVAGIYLFHRLQYSENKRMVFSKAYVTVLMTIVSLLLSVYPIPYREDYLIHLTFVPLLFLGRFTNMVYTLSATVIVAIVEIVVFNNSIMYGVTLIVIAAVTSAIGPFLKQNDVLSLLILNVVTIIILFGVALVSPIYTLSEVIILIPISLIITLASAITFVDIWHFFSLVNRYENEDKYDYLTGLGNVKEFDRHLNEISRKAEKEHQSIALLLIDIDGFKDVNDTYSHKSGDAVLKQMSQLLKNYVPNQFKIFRNGGEEFSVVIHNYSLDQSVKLAENIRSGVEKSSFHLPNKEVIKLSVSIGVGYLTDDDPKSQRKVFKDADDMVHVAKNQGRNKVMFNPIINL</sequence>
<proteinExistence type="predicted"/>
<accession>Q5HHS4</accession>